<dbReference type="EMBL" id="S58867">
    <property type="protein sequence ID" value="AAB26221.1"/>
    <property type="molecule type" value="mRNA"/>
</dbReference>
<dbReference type="PIR" id="A56904">
    <property type="entry name" value="A56904"/>
</dbReference>
<dbReference type="SMR" id="P45654"/>
<dbReference type="OrthoDB" id="9925773at2759"/>
<dbReference type="GO" id="GO:0005615">
    <property type="term" value="C:extracellular space"/>
    <property type="evidence" value="ECO:0007669"/>
    <property type="project" value="InterPro"/>
</dbReference>
<dbReference type="GO" id="GO:0070186">
    <property type="term" value="F:growth hormone activity"/>
    <property type="evidence" value="ECO:0007669"/>
    <property type="project" value="TreeGrafter"/>
</dbReference>
<dbReference type="GO" id="GO:0005131">
    <property type="term" value="F:growth hormone receptor binding"/>
    <property type="evidence" value="ECO:0007669"/>
    <property type="project" value="InterPro"/>
</dbReference>
<dbReference type="GO" id="GO:0046872">
    <property type="term" value="F:metal ion binding"/>
    <property type="evidence" value="ECO:0007669"/>
    <property type="project" value="UniProtKB-KW"/>
</dbReference>
<dbReference type="GO" id="GO:0048513">
    <property type="term" value="P:animal organ development"/>
    <property type="evidence" value="ECO:0007669"/>
    <property type="project" value="TreeGrafter"/>
</dbReference>
<dbReference type="GO" id="GO:0060396">
    <property type="term" value="P:growth hormone receptor signaling pathway"/>
    <property type="evidence" value="ECO:0007669"/>
    <property type="project" value="TreeGrafter"/>
</dbReference>
<dbReference type="GO" id="GO:0045927">
    <property type="term" value="P:positive regulation of growth"/>
    <property type="evidence" value="ECO:0007669"/>
    <property type="project" value="TreeGrafter"/>
</dbReference>
<dbReference type="GO" id="GO:0046427">
    <property type="term" value="P:positive regulation of receptor signaling pathway via JAK-STAT"/>
    <property type="evidence" value="ECO:0007669"/>
    <property type="project" value="TreeGrafter"/>
</dbReference>
<dbReference type="GO" id="GO:0031667">
    <property type="term" value="P:response to nutrient levels"/>
    <property type="evidence" value="ECO:0007669"/>
    <property type="project" value="TreeGrafter"/>
</dbReference>
<dbReference type="CDD" id="cd10285">
    <property type="entry name" value="somatotropin_like"/>
    <property type="match status" value="1"/>
</dbReference>
<dbReference type="FunFam" id="1.20.1250.10:FF:000009">
    <property type="entry name" value="Growth hormone"/>
    <property type="match status" value="1"/>
</dbReference>
<dbReference type="Gene3D" id="1.20.1250.10">
    <property type="match status" value="1"/>
</dbReference>
<dbReference type="InterPro" id="IPR009079">
    <property type="entry name" value="4_helix_cytokine-like_core"/>
</dbReference>
<dbReference type="InterPro" id="IPR034975">
    <property type="entry name" value="Somatotropin"/>
</dbReference>
<dbReference type="InterPro" id="IPR001400">
    <property type="entry name" value="Somatotropin/Prolactin"/>
</dbReference>
<dbReference type="InterPro" id="IPR018116">
    <property type="entry name" value="Somatotropin_CS"/>
</dbReference>
<dbReference type="PANTHER" id="PTHR11417:SF2">
    <property type="entry name" value="SOMATOTROPIN"/>
    <property type="match status" value="1"/>
</dbReference>
<dbReference type="PANTHER" id="PTHR11417">
    <property type="entry name" value="SOMATOTROPIN,PROLACTIN"/>
    <property type="match status" value="1"/>
</dbReference>
<dbReference type="Pfam" id="PF00103">
    <property type="entry name" value="Hormone_1"/>
    <property type="match status" value="1"/>
</dbReference>
<dbReference type="PRINTS" id="PR00836">
    <property type="entry name" value="SOMATOTROPIN"/>
</dbReference>
<dbReference type="SUPFAM" id="SSF47266">
    <property type="entry name" value="4-helical cytokines"/>
    <property type="match status" value="1"/>
</dbReference>
<dbReference type="PROSITE" id="PS00266">
    <property type="entry name" value="SOMATOTROPIN_1"/>
    <property type="match status" value="1"/>
</dbReference>
<dbReference type="PROSITE" id="PS00338">
    <property type="entry name" value="SOMATOTROPIN_2"/>
    <property type="match status" value="1"/>
</dbReference>
<feature type="signal peptide" evidence="1">
    <location>
        <begin position="1"/>
        <end position="17"/>
    </location>
</feature>
<feature type="chain" id="PRO_0000033012" description="Somatotropin">
    <location>
        <begin position="18"/>
        <end position="204"/>
    </location>
</feature>
<feature type="binding site" evidence="1">
    <location>
        <position position="36"/>
    </location>
    <ligand>
        <name>Zn(2+)</name>
        <dbReference type="ChEBI" id="CHEBI:29105"/>
    </ligand>
</feature>
<feature type="binding site" evidence="1">
    <location>
        <position position="186"/>
    </location>
    <ligand>
        <name>Zn(2+)</name>
        <dbReference type="ChEBI" id="CHEBI:29105"/>
    </ligand>
</feature>
<feature type="modified residue" description="Pyrrolidone carboxylic acid" evidence="1">
    <location>
        <position position="18"/>
    </location>
</feature>
<feature type="disulfide bond" evidence="1">
    <location>
        <begin position="69"/>
        <end position="177"/>
    </location>
</feature>
<feature type="disulfide bond" evidence="1">
    <location>
        <begin position="194"/>
        <end position="202"/>
    </location>
</feature>
<comment type="function">
    <text>Growth hormone plays an important role in growth control and is involved in the regulation of several anabolic processes. Implicated as an osmoregulatory substance important for seawater adaptation.</text>
</comment>
<comment type="subcellular location">
    <subcellularLocation>
        <location>Secreted</location>
    </subcellularLocation>
</comment>
<comment type="similarity">
    <text evidence="2">Belongs to the somatotropin/prolactin family.</text>
</comment>
<evidence type="ECO:0000250" key="1"/>
<evidence type="ECO:0000305" key="2"/>
<protein>
    <recommendedName>
        <fullName>Somatotropin</fullName>
    </recommendedName>
    <alternativeName>
        <fullName>Growth hormone</fullName>
    </alternativeName>
</protein>
<keyword id="KW-1015">Disulfide bond</keyword>
<keyword id="KW-0372">Hormone</keyword>
<keyword id="KW-0479">Metal-binding</keyword>
<keyword id="KW-0873">Pyrrolidone carboxylic acid</keyword>
<keyword id="KW-0964">Secreted</keyword>
<keyword id="KW-0732">Signal</keyword>
<keyword id="KW-0862">Zinc</keyword>
<reference key="1">
    <citation type="journal article" date="1993" name="Comp. Biochem. Physiol.">
        <title>Molecular cloning and expression of yellowfin porgy (Acanthopagrus latus houttuyn) growth hormone cDNA.</title>
        <authorList>
            <person name="Tsai H.J."/>
            <person name="Lin K.L."/>
            <person name="Chen T.T."/>
        </authorList>
    </citation>
    <scope>NUCLEOTIDE SEQUENCE [MRNA]</scope>
</reference>
<proteinExistence type="evidence at transcript level"/>
<accession>P45654</accession>
<gene>
    <name type="primary">gh</name>
</gene>
<name>SOMA_ACALA</name>
<sequence length="204" mass="23056">MDRVVLMLSVLSLGVSSQPITDGQRLFSIAVSRVQHLHLLAQRLFSDFESSLQTEEQRQLNKIFLQDFCNSDYIISPIDKHETQRSSVLKLLSISYRLVESWEFPSRSLAGGSAPRNQISPKLSELKTGIHLLIRANEDGAELFPDSSALQLAPYGDYYQSPGTDESLRRTYELLACFKKDMHKVETYLTVAKCRLSPEANCTL</sequence>
<organism>
    <name type="scientific">Acanthopagrus latus</name>
    <name type="common">Yellowfin seabream</name>
    <name type="synonym">Sparus latus</name>
    <dbReference type="NCBI Taxonomy" id="8177"/>
    <lineage>
        <taxon>Eukaryota</taxon>
        <taxon>Metazoa</taxon>
        <taxon>Chordata</taxon>
        <taxon>Craniata</taxon>
        <taxon>Vertebrata</taxon>
        <taxon>Euteleostomi</taxon>
        <taxon>Actinopterygii</taxon>
        <taxon>Neopterygii</taxon>
        <taxon>Teleostei</taxon>
        <taxon>Neoteleostei</taxon>
        <taxon>Acanthomorphata</taxon>
        <taxon>Eupercaria</taxon>
        <taxon>Spariformes</taxon>
        <taxon>Sparidae</taxon>
        <taxon>Acanthopagrus</taxon>
    </lineage>
</organism>